<keyword id="KW-0150">Chloroplast</keyword>
<keyword id="KW-0507">mRNA processing</keyword>
<keyword id="KW-0934">Plastid</keyword>
<keyword id="KW-0694">RNA-binding</keyword>
<keyword id="KW-0819">tRNA processing</keyword>
<gene>
    <name evidence="1" type="primary">matK</name>
</gene>
<name>MATK_FRAVE</name>
<protein>
    <recommendedName>
        <fullName evidence="1">Maturase K</fullName>
    </recommendedName>
    <alternativeName>
        <fullName evidence="1">Intron maturase</fullName>
    </alternativeName>
</protein>
<evidence type="ECO:0000255" key="1">
    <source>
        <dbReference type="HAMAP-Rule" id="MF_01390"/>
    </source>
</evidence>
<reference key="1">
    <citation type="submission" date="2000-07" db="EMBL/GenBank/DDBJ databases">
        <title>Phylogenetic relationships among putative genes encoding polygalacturonase inhibitor proteins (PGIPs) in Rosaceae.</title>
        <authorList>
            <person name="Potter D."/>
            <person name="Gao F."/>
            <person name="Oh S.-H."/>
            <person name="Baggett S."/>
        </authorList>
    </citation>
    <scope>NUCLEOTIDE SEQUENCE [GENOMIC DNA]</scope>
</reference>
<comment type="function">
    <text evidence="1">Usually encoded in the trnK tRNA gene intron. Probably assists in splicing its own and other chloroplast group II introns.</text>
</comment>
<comment type="subcellular location">
    <subcellularLocation>
        <location>Plastid</location>
        <location>Chloroplast</location>
    </subcellularLocation>
</comment>
<comment type="similarity">
    <text evidence="1">Belongs to the intron maturase 2 family. MatK subfamily.</text>
</comment>
<geneLocation type="chloroplast"/>
<feature type="chain" id="PRO_0000143390" description="Maturase K">
    <location>
        <begin position="1"/>
        <end position="500"/>
    </location>
</feature>
<accession>Q8WJQ6</accession>
<dbReference type="EMBL" id="AF288102">
    <property type="protein sequence ID" value="AAL35996.1"/>
    <property type="molecule type" value="Genomic_DNA"/>
</dbReference>
<dbReference type="GO" id="GO:0009507">
    <property type="term" value="C:chloroplast"/>
    <property type="evidence" value="ECO:0007669"/>
    <property type="project" value="UniProtKB-SubCell"/>
</dbReference>
<dbReference type="GO" id="GO:0003723">
    <property type="term" value="F:RNA binding"/>
    <property type="evidence" value="ECO:0007669"/>
    <property type="project" value="UniProtKB-KW"/>
</dbReference>
<dbReference type="GO" id="GO:0006397">
    <property type="term" value="P:mRNA processing"/>
    <property type="evidence" value="ECO:0007669"/>
    <property type="project" value="UniProtKB-KW"/>
</dbReference>
<dbReference type="GO" id="GO:0008380">
    <property type="term" value="P:RNA splicing"/>
    <property type="evidence" value="ECO:0007669"/>
    <property type="project" value="UniProtKB-UniRule"/>
</dbReference>
<dbReference type="GO" id="GO:0008033">
    <property type="term" value="P:tRNA processing"/>
    <property type="evidence" value="ECO:0007669"/>
    <property type="project" value="UniProtKB-KW"/>
</dbReference>
<dbReference type="HAMAP" id="MF_01390">
    <property type="entry name" value="MatK"/>
    <property type="match status" value="1"/>
</dbReference>
<dbReference type="InterPro" id="IPR024937">
    <property type="entry name" value="Domain_X"/>
</dbReference>
<dbReference type="InterPro" id="IPR002866">
    <property type="entry name" value="Maturase_MatK"/>
</dbReference>
<dbReference type="InterPro" id="IPR024942">
    <property type="entry name" value="Maturase_MatK_N"/>
</dbReference>
<dbReference type="PANTHER" id="PTHR34811">
    <property type="entry name" value="MATURASE K"/>
    <property type="match status" value="1"/>
</dbReference>
<dbReference type="PANTHER" id="PTHR34811:SF1">
    <property type="entry name" value="MATURASE K"/>
    <property type="match status" value="1"/>
</dbReference>
<dbReference type="Pfam" id="PF01348">
    <property type="entry name" value="Intron_maturas2"/>
    <property type="match status" value="1"/>
</dbReference>
<dbReference type="Pfam" id="PF01824">
    <property type="entry name" value="MatK_N"/>
    <property type="match status" value="1"/>
</dbReference>
<proteinExistence type="inferred from homology"/>
<organism>
    <name type="scientific">Fragaria vesca</name>
    <name type="common">Woodland strawberry</name>
    <name type="synonym">Potentilla vesca</name>
    <dbReference type="NCBI Taxonomy" id="57918"/>
    <lineage>
        <taxon>Eukaryota</taxon>
        <taxon>Viridiplantae</taxon>
        <taxon>Streptophyta</taxon>
        <taxon>Embryophyta</taxon>
        <taxon>Tracheophyta</taxon>
        <taxon>Spermatophyta</taxon>
        <taxon>Magnoliopsida</taxon>
        <taxon>eudicotyledons</taxon>
        <taxon>Gunneridae</taxon>
        <taxon>Pentapetalae</taxon>
        <taxon>rosids</taxon>
        <taxon>fabids</taxon>
        <taxon>Rosales</taxon>
        <taxon>Rosaceae</taxon>
        <taxon>Rosoideae</taxon>
        <taxon>Potentilleae</taxon>
        <taxon>Fragariinae</taxon>
        <taxon>Fragaria</taxon>
    </lineage>
</organism>
<sequence length="500" mass="59408">MEEFQGYFELYRSPQYDFLYPLIFREYIYALAHDRGLNRSILFDNVGYDKKSSLLIIKRLISRMYQQNHFLISVNDSNQNKFLGYNKNLYSQMISEGFAVIVEIPFSLRLVSSLEETESIKSYNLRSIHSIFPFFEDKFPHLNYASDVLIPYPIHLEILVQTLRYCVKDPSSLHLLRLFLHEYYSWNTLITPQKSIFAKSNQRLFLLLYNSYVYEYESILLFLRNQSNHLRLTSSGIFFERIRFYEKIKYPVEEVLFPATLWFFKDPFIQYVSHQGKLILASKDTPLLMNKWKYYLVNFWQCHFYVWSQPGRIHLNQLSKHSFDFLGYLSSIRPNISVVRSQLLENTYLMYNAMKKLNTLFPIIPMIGSLAKVKFCNTLGHPISKSSWADSSDSDIIDRFVRIVGNISHYYSGSSKKKSLYRIKYILRLSCVKTLARKHKSTVRTFLKRLGPKLLDEFFTEEEQIFSLLFPRASSTLKRFYRGPIWYLDILCINDTVNHE</sequence>